<feature type="chain" id="PRO_1000006025" description="DNA-directed RNA polymerase subunit omega">
    <location>
        <begin position="1"/>
        <end position="105"/>
    </location>
</feature>
<gene>
    <name evidence="1" type="primary">rpoZ</name>
    <name type="ordered locus">MGAS9429_Spy1335</name>
</gene>
<comment type="function">
    <text evidence="1">Promotes RNA polymerase assembly. Latches the N- and C-terminal regions of the beta' subunit thereby facilitating its interaction with the beta and alpha subunits.</text>
</comment>
<comment type="catalytic activity">
    <reaction evidence="1">
        <text>RNA(n) + a ribonucleoside 5'-triphosphate = RNA(n+1) + diphosphate</text>
        <dbReference type="Rhea" id="RHEA:21248"/>
        <dbReference type="Rhea" id="RHEA-COMP:14527"/>
        <dbReference type="Rhea" id="RHEA-COMP:17342"/>
        <dbReference type="ChEBI" id="CHEBI:33019"/>
        <dbReference type="ChEBI" id="CHEBI:61557"/>
        <dbReference type="ChEBI" id="CHEBI:140395"/>
        <dbReference type="EC" id="2.7.7.6"/>
    </reaction>
</comment>
<comment type="subunit">
    <text evidence="1">The RNAP catalytic core consists of 2 alpha, 1 beta, 1 beta' and 1 omega subunit. When a sigma factor is associated with the core the holoenzyme is formed, which can initiate transcription.</text>
</comment>
<comment type="similarity">
    <text evidence="1">Belongs to the RNA polymerase subunit omega family.</text>
</comment>
<reference key="1">
    <citation type="journal article" date="2006" name="Proc. Natl. Acad. Sci. U.S.A.">
        <title>Molecular genetic anatomy of inter- and intraserotype variation in the human bacterial pathogen group A Streptococcus.</title>
        <authorList>
            <person name="Beres S.B."/>
            <person name="Richter E.W."/>
            <person name="Nagiec M.J."/>
            <person name="Sumby P."/>
            <person name="Porcella S.F."/>
            <person name="DeLeo F.R."/>
            <person name="Musser J.M."/>
        </authorList>
    </citation>
    <scope>NUCLEOTIDE SEQUENCE [LARGE SCALE GENOMIC DNA]</scope>
    <source>
        <strain>MGAS9429</strain>
    </source>
</reference>
<proteinExistence type="inferred from homology"/>
<name>RPOZ_STRPC</name>
<protein>
    <recommendedName>
        <fullName evidence="1">DNA-directed RNA polymerase subunit omega</fullName>
        <shortName evidence="1">RNAP omega subunit</shortName>
        <ecNumber evidence="1">2.7.7.6</ecNumber>
    </recommendedName>
    <alternativeName>
        <fullName evidence="1">RNA polymerase omega subunit</fullName>
    </alternativeName>
    <alternativeName>
        <fullName evidence="1">Transcriptase subunit omega</fullName>
    </alternativeName>
</protein>
<keyword id="KW-0240">DNA-directed RNA polymerase</keyword>
<keyword id="KW-0548">Nucleotidyltransferase</keyword>
<keyword id="KW-0804">Transcription</keyword>
<keyword id="KW-0808">Transferase</keyword>
<accession>Q1JKP7</accession>
<evidence type="ECO:0000255" key="1">
    <source>
        <dbReference type="HAMAP-Rule" id="MF_00366"/>
    </source>
</evidence>
<sequence length="105" mass="11837">MMLKPSIDTLLDKVPSKYSLVILQAKRAHELEAGATPTQEFKSVKSTLQALEEIESGNVVIHPDPSAKREAVRAKIEAERLAKEEEERKIKEQIAKEKEEEGEKI</sequence>
<dbReference type="EC" id="2.7.7.6" evidence="1"/>
<dbReference type="EMBL" id="CP000259">
    <property type="protein sequence ID" value="ABF32522.1"/>
    <property type="molecule type" value="Genomic_DNA"/>
</dbReference>
<dbReference type="RefSeq" id="WP_002983650.1">
    <property type="nucleotide sequence ID" value="NC_008021.1"/>
</dbReference>
<dbReference type="SMR" id="Q1JKP7"/>
<dbReference type="GeneID" id="69900498"/>
<dbReference type="KEGG" id="spk:MGAS9429_Spy1335"/>
<dbReference type="HOGENOM" id="CLU_125406_0_0_9"/>
<dbReference type="Proteomes" id="UP000002433">
    <property type="component" value="Chromosome"/>
</dbReference>
<dbReference type="GO" id="GO:0000428">
    <property type="term" value="C:DNA-directed RNA polymerase complex"/>
    <property type="evidence" value="ECO:0007669"/>
    <property type="project" value="UniProtKB-KW"/>
</dbReference>
<dbReference type="GO" id="GO:0003677">
    <property type="term" value="F:DNA binding"/>
    <property type="evidence" value="ECO:0007669"/>
    <property type="project" value="UniProtKB-UniRule"/>
</dbReference>
<dbReference type="GO" id="GO:0003899">
    <property type="term" value="F:DNA-directed RNA polymerase activity"/>
    <property type="evidence" value="ECO:0007669"/>
    <property type="project" value="UniProtKB-UniRule"/>
</dbReference>
<dbReference type="GO" id="GO:0006351">
    <property type="term" value="P:DNA-templated transcription"/>
    <property type="evidence" value="ECO:0007669"/>
    <property type="project" value="UniProtKB-UniRule"/>
</dbReference>
<dbReference type="Gene3D" id="3.90.940.10">
    <property type="match status" value="1"/>
</dbReference>
<dbReference type="HAMAP" id="MF_00366">
    <property type="entry name" value="RNApol_bact_RpoZ"/>
    <property type="match status" value="1"/>
</dbReference>
<dbReference type="InterPro" id="IPR003716">
    <property type="entry name" value="DNA-dir_RNA_pol_omega"/>
</dbReference>
<dbReference type="InterPro" id="IPR006110">
    <property type="entry name" value="Pol_omega/Rpo6/RPB6"/>
</dbReference>
<dbReference type="InterPro" id="IPR036161">
    <property type="entry name" value="RPB6/omega-like_sf"/>
</dbReference>
<dbReference type="NCBIfam" id="TIGR00690">
    <property type="entry name" value="rpoZ"/>
    <property type="match status" value="1"/>
</dbReference>
<dbReference type="PANTHER" id="PTHR34476">
    <property type="entry name" value="DNA-DIRECTED RNA POLYMERASE SUBUNIT OMEGA"/>
    <property type="match status" value="1"/>
</dbReference>
<dbReference type="PANTHER" id="PTHR34476:SF1">
    <property type="entry name" value="DNA-DIRECTED RNA POLYMERASE SUBUNIT OMEGA"/>
    <property type="match status" value="1"/>
</dbReference>
<dbReference type="Pfam" id="PF01192">
    <property type="entry name" value="RNA_pol_Rpb6"/>
    <property type="match status" value="1"/>
</dbReference>
<dbReference type="SMART" id="SM01409">
    <property type="entry name" value="RNA_pol_Rpb6"/>
    <property type="match status" value="1"/>
</dbReference>
<dbReference type="SUPFAM" id="SSF63562">
    <property type="entry name" value="RPB6/omega subunit-like"/>
    <property type="match status" value="1"/>
</dbReference>
<organism>
    <name type="scientific">Streptococcus pyogenes serotype M12 (strain MGAS9429)</name>
    <dbReference type="NCBI Taxonomy" id="370551"/>
    <lineage>
        <taxon>Bacteria</taxon>
        <taxon>Bacillati</taxon>
        <taxon>Bacillota</taxon>
        <taxon>Bacilli</taxon>
        <taxon>Lactobacillales</taxon>
        <taxon>Streptococcaceae</taxon>
        <taxon>Streptococcus</taxon>
    </lineage>
</organism>